<gene>
    <name evidence="6" type="primary">soxG</name>
</gene>
<evidence type="ECO:0000269" key="1">
    <source>
    </source>
</evidence>
<evidence type="ECO:0000269" key="2">
    <source>
    </source>
</evidence>
<evidence type="ECO:0000269" key="3">
    <source>
    </source>
</evidence>
<evidence type="ECO:0000269" key="4">
    <source>
    </source>
</evidence>
<evidence type="ECO:0000269" key="5">
    <source>
    </source>
</evidence>
<evidence type="ECO:0000303" key="6">
    <source>
    </source>
</evidence>
<evidence type="ECO:0000305" key="7"/>
<evidence type="ECO:0000305" key="8">
    <source>
    </source>
</evidence>
<organism>
    <name type="scientific">Corynebacterium sp. (strain P-1)</name>
    <dbReference type="NCBI Taxonomy" id="69006"/>
    <lineage>
        <taxon>Bacteria</taxon>
        <taxon>Bacillati</taxon>
        <taxon>Actinomycetota</taxon>
        <taxon>Actinomycetes</taxon>
        <taxon>Mycobacteriales</taxon>
        <taxon>Corynebacteriaceae</taxon>
        <taxon>Corynebacterium</taxon>
    </lineage>
</organism>
<comment type="function">
    <text evidence="1 2 4 5">In the presence of tetrahydrofolate, catalyzes the oxidative demethylation of sarcosine to yield glycine, 5,10-methylenetetrahydrofolate and hydrogen peroxide (PubMed:11330998, PubMed:3427080, PubMed:9185627). In the absence of tetrahydrofolate, catalyzes the oxidative demethylation of sarcosine to yield glycine, formaldehyde and hydrogen peroxide (PubMed:11330998, PubMed:7692961, PubMed:9185627).</text>
</comment>
<comment type="catalytic activity">
    <reaction evidence="2 5 8">
        <text>sarcosine + (6S)-5,6,7,8-tetrahydrofolate + O2 = (6R)-5,10-methylene-5,6,7,8-tetrahydrofolate + glycine + H2O2</text>
        <dbReference type="Rhea" id="RHEA:70455"/>
        <dbReference type="ChEBI" id="CHEBI:15379"/>
        <dbReference type="ChEBI" id="CHEBI:15636"/>
        <dbReference type="ChEBI" id="CHEBI:16240"/>
        <dbReference type="ChEBI" id="CHEBI:57305"/>
        <dbReference type="ChEBI" id="CHEBI:57433"/>
        <dbReference type="ChEBI" id="CHEBI:57453"/>
        <dbReference type="EC" id="1.5.3.24"/>
    </reaction>
</comment>
<comment type="catalytic activity">
    <reaction evidence="1 4 5">
        <text>sarcosine + O2 + H2O = formaldehyde + glycine + H2O2</text>
        <dbReference type="Rhea" id="RHEA:13313"/>
        <dbReference type="ChEBI" id="CHEBI:15377"/>
        <dbReference type="ChEBI" id="CHEBI:15379"/>
        <dbReference type="ChEBI" id="CHEBI:16240"/>
        <dbReference type="ChEBI" id="CHEBI:16842"/>
        <dbReference type="ChEBI" id="CHEBI:57305"/>
        <dbReference type="ChEBI" id="CHEBI:57433"/>
    </reaction>
</comment>
<comment type="subunit">
    <text evidence="1 3 4">Heterotetramer composed of subunits alpha (SoxA), beta (SoxB), gamma (SoxG) and delta (SoxD).</text>
</comment>
<comment type="subcellular location">
    <subcellularLocation>
        <location evidence="4">Cytoplasm</location>
    </subcellularLocation>
</comment>
<comment type="miscellaneous">
    <text evidence="5">Utilization of tetrahydrofolate is probably the physiological reaction since the products are substrates for serine hydroxymethyltransferase, an enzyme which is part of the sarcosine oxidase operon.</text>
</comment>
<comment type="similarity">
    <text evidence="7">Belongs to the SoxG family.</text>
</comment>
<proteinExistence type="evidence at protein level"/>
<dbReference type="EC" id="1.5.3.24" evidence="2 5 8"/>
<dbReference type="EMBL" id="U23955">
    <property type="protein sequence ID" value="AAC43462.1"/>
    <property type="molecule type" value="Genomic_DNA"/>
</dbReference>
<dbReference type="SMR" id="Q46338"/>
<dbReference type="KEGG" id="ag:AAC43462"/>
<dbReference type="BioCyc" id="MetaCyc:MONOMER-8523"/>
<dbReference type="GO" id="GO:0005737">
    <property type="term" value="C:cytoplasm"/>
    <property type="evidence" value="ECO:0007669"/>
    <property type="project" value="UniProtKB-SubCell"/>
</dbReference>
<dbReference type="GO" id="GO:0008115">
    <property type="term" value="F:sarcosine oxidase activity"/>
    <property type="evidence" value="ECO:0007669"/>
    <property type="project" value="UniProtKB-EC"/>
</dbReference>
<dbReference type="GO" id="GO:1901053">
    <property type="term" value="P:sarcosine catabolic process"/>
    <property type="evidence" value="ECO:0007669"/>
    <property type="project" value="InterPro"/>
</dbReference>
<dbReference type="Gene3D" id="3.30.70.1520">
    <property type="entry name" value="Heterotetrameric sarcosine oxidase"/>
    <property type="match status" value="1"/>
</dbReference>
<dbReference type="Gene3D" id="3.30.1360.120">
    <property type="entry name" value="Probable tRNA modification gtpase trme, domain 1"/>
    <property type="match status" value="1"/>
</dbReference>
<dbReference type="InterPro" id="IPR007375">
    <property type="entry name" value="SoxG"/>
</dbReference>
<dbReference type="InterPro" id="IPR006280">
    <property type="entry name" value="SoxG_het"/>
</dbReference>
<dbReference type="InterPro" id="IPR027266">
    <property type="entry name" value="TrmE/GcvT_dom1"/>
</dbReference>
<dbReference type="NCBIfam" id="TIGR01375">
    <property type="entry name" value="soxG"/>
    <property type="match status" value="1"/>
</dbReference>
<dbReference type="Pfam" id="PF04268">
    <property type="entry name" value="SoxG"/>
    <property type="match status" value="1"/>
</dbReference>
<dbReference type="SUPFAM" id="SSF103025">
    <property type="entry name" value="Folate-binding domain"/>
    <property type="match status" value="1"/>
</dbReference>
<feature type="initiator methionine" description="Removed" evidence="3">
    <location>
        <position position="1"/>
    </location>
</feature>
<feature type="chain" id="PRO_0000072051" description="Sarcosine oxidase subunit gamma">
    <location>
        <begin position="2"/>
        <end position="203"/>
    </location>
</feature>
<keyword id="KW-0963">Cytoplasm</keyword>
<keyword id="KW-0903">Direct protein sequencing</keyword>
<keyword id="KW-0560">Oxidoreductase</keyword>
<name>TSOXG_CORS1</name>
<protein>
    <recommendedName>
        <fullName evidence="7">Sarcosine oxidase subunit gamma</fullName>
        <shortName evidence="7">Sarcosine oxidase subunit G</shortName>
        <ecNumber evidence="2 5 8">1.5.3.24</ecNumber>
    </recommendedName>
    <alternativeName>
        <fullName evidence="7">Sarcosine oxidase (5,10-methylenetetrahydrofolate-forming) subunit gamma</fullName>
    </alternativeName>
    <alternativeName>
        <fullName evidence="7">Tetrameric sarcosine oxidase subunit gamma</fullName>
        <shortName evidence="7">TSOX subunit gamma</shortName>
    </alternativeName>
</protein>
<sequence>MASNTLIESTSVRRSPAEHLAEAMAQGSTAGTVQLREIAFATQVGVRAVPGSGGFAALAEAVGTGLPQQVGVVAGSVEGTAVLWLGPDEFLAIAPEGAELAAELVAALGDEPGQVLDLSANRSVLELSGPAAPLVLRKSCPADLHPRAFGVNLAITTTLANIPVLLWRTGEQSWYILPRASFTEHTVHWLIDAMSEFASEPVA</sequence>
<accession>Q46338</accession>
<reference key="1">
    <citation type="journal article" date="1995" name="J. Biol. Chem.">
        <title>Sequence analysis of sarcosine oxidase and nearby genes reveals homologies with key enzymes of folate one-carbon metabolism.</title>
        <authorList>
            <person name="Chlumsky L.J."/>
            <person name="Zhang L."/>
            <person name="Jorns M.S."/>
        </authorList>
    </citation>
    <scope>NUCLEOTIDE SEQUENCE [GENOMIC DNA]</scope>
    <scope>PROTEIN SEQUENCE OF 2-12</scope>
    <scope>SUBUNIT</scope>
    <scope>IDENTIFICATION BY MASS SPECTROMETRY</scope>
    <source>
        <strain>P-1</strain>
    </source>
</reference>
<reference key="2">
    <citation type="journal article" date="1987" name="Biochemistry">
        <title>Interaction of tetrahydrofolate and other folate derivatives with bacterial sarcosine oxidase.</title>
        <authorList>
            <person name="Kvalnes-Krick K."/>
            <person name="Jorns M.S."/>
        </authorList>
    </citation>
    <scope>FUNCTION</scope>
    <scope>CATALYTIC ACTIVITY</scope>
    <source>
        <strain>P-1</strain>
    </source>
</reference>
<reference key="3">
    <citation type="journal article" date="1993" name="Biochemistry">
        <title>Preparation and properties of recombinant corynebacterial sarcosine oxidase: evidence for posttranslational modification during turnover with sarcosine.</title>
        <authorList>
            <person name="Chlumsky L.J."/>
            <person name="Zhang L."/>
            <person name="Ramsey A.J."/>
            <person name="Jorns M.S."/>
        </authorList>
    </citation>
    <scope>FUNCTION</scope>
    <scope>CATALYTIC ACTIVITY</scope>
    <scope>SUBUNIT</scope>
    <scope>SUBCELLULAR LOCATION</scope>
    <source>
        <strain>P-1</strain>
    </source>
</reference>
<reference key="4">
    <citation type="journal article" date="1997" name="Arch. Biochem. Biophys.">
        <title>Folate utilization by monomeric versus heterotetrameric sarcosine oxidases.</title>
        <authorList>
            <person name="Wagner M.A."/>
            <person name="Schuman Jorns M."/>
        </authorList>
    </citation>
    <scope>FUNCTION</scope>
    <scope>CATALYTIC ACTIVITY</scope>
    <source>
        <strain>P-1</strain>
    </source>
</reference>
<reference key="5">
    <citation type="journal article" date="2001" name="Biochemistry">
        <title>Organization of the multiple coenzymes and subunits and role of the covalent flavin link in the complex heterotetrameric sarcosine oxidase.</title>
        <authorList>
            <person name="Eschenbrenner M."/>
            <person name="Chlumsky L.J."/>
            <person name="Khanna P."/>
            <person name="Strasser F."/>
            <person name="Jorns M.S."/>
        </authorList>
    </citation>
    <scope>FUNCTION</scope>
    <scope>CATALYTIC ACTIVITY</scope>
    <scope>SUBUNIT</scope>
    <source>
        <strain>P-1</strain>
    </source>
</reference>